<dbReference type="EC" id="6.3.5.5" evidence="1"/>
<dbReference type="EMBL" id="BA000028">
    <property type="protein sequence ID" value="BAC13446.1"/>
    <property type="molecule type" value="Genomic_DNA"/>
</dbReference>
<dbReference type="RefSeq" id="WP_011065891.1">
    <property type="nucleotide sequence ID" value="NC_004193.1"/>
</dbReference>
<dbReference type="SMR" id="Q8CXH8"/>
<dbReference type="STRING" id="221109.gene:10733730"/>
<dbReference type="KEGG" id="oih:OB1490"/>
<dbReference type="eggNOG" id="COG0505">
    <property type="taxonomic scope" value="Bacteria"/>
</dbReference>
<dbReference type="HOGENOM" id="CLU_035901_2_1_9"/>
<dbReference type="OrthoDB" id="9804328at2"/>
<dbReference type="PhylomeDB" id="Q8CXH8"/>
<dbReference type="UniPathway" id="UPA00068">
    <property type="reaction ID" value="UER00171"/>
</dbReference>
<dbReference type="UniPathway" id="UPA00070">
    <property type="reaction ID" value="UER00115"/>
</dbReference>
<dbReference type="Proteomes" id="UP000000822">
    <property type="component" value="Chromosome"/>
</dbReference>
<dbReference type="GO" id="GO:0005524">
    <property type="term" value="F:ATP binding"/>
    <property type="evidence" value="ECO:0007669"/>
    <property type="project" value="UniProtKB-UniRule"/>
</dbReference>
<dbReference type="GO" id="GO:0004088">
    <property type="term" value="F:carbamoyl-phosphate synthase (glutamine-hydrolyzing) activity"/>
    <property type="evidence" value="ECO:0007669"/>
    <property type="project" value="UniProtKB-UniRule"/>
</dbReference>
<dbReference type="GO" id="GO:0004359">
    <property type="term" value="F:glutaminase activity"/>
    <property type="evidence" value="ECO:0007669"/>
    <property type="project" value="RHEA"/>
</dbReference>
<dbReference type="GO" id="GO:0006207">
    <property type="term" value="P:'de novo' pyrimidine nucleobase biosynthetic process"/>
    <property type="evidence" value="ECO:0007669"/>
    <property type="project" value="InterPro"/>
</dbReference>
<dbReference type="GO" id="GO:0044205">
    <property type="term" value="P:'de novo' UMP biosynthetic process"/>
    <property type="evidence" value="ECO:0007669"/>
    <property type="project" value="UniProtKB-UniRule"/>
</dbReference>
<dbReference type="GO" id="GO:0006541">
    <property type="term" value="P:glutamine metabolic process"/>
    <property type="evidence" value="ECO:0007669"/>
    <property type="project" value="InterPro"/>
</dbReference>
<dbReference type="GO" id="GO:0006526">
    <property type="term" value="P:L-arginine biosynthetic process"/>
    <property type="evidence" value="ECO:0007669"/>
    <property type="project" value="UniProtKB-UniRule"/>
</dbReference>
<dbReference type="CDD" id="cd01744">
    <property type="entry name" value="GATase1_CPSase"/>
    <property type="match status" value="1"/>
</dbReference>
<dbReference type="FunFam" id="3.40.50.880:FF:000029">
    <property type="entry name" value="Carbamoyl-phosphate synthase small chain"/>
    <property type="match status" value="1"/>
</dbReference>
<dbReference type="FunFam" id="3.50.30.20:FF:000001">
    <property type="entry name" value="Carbamoyl-phosphate synthase small chain"/>
    <property type="match status" value="1"/>
</dbReference>
<dbReference type="Gene3D" id="3.40.50.880">
    <property type="match status" value="1"/>
</dbReference>
<dbReference type="Gene3D" id="3.50.30.20">
    <property type="entry name" value="Carbamoyl-phosphate synthase small subunit, N-terminal domain"/>
    <property type="match status" value="1"/>
</dbReference>
<dbReference type="HAMAP" id="MF_01209">
    <property type="entry name" value="CPSase_S_chain"/>
    <property type="match status" value="1"/>
</dbReference>
<dbReference type="InterPro" id="IPR050472">
    <property type="entry name" value="Anth_synth/Amidotransfase"/>
</dbReference>
<dbReference type="InterPro" id="IPR006274">
    <property type="entry name" value="CarbamoylP_synth_ssu"/>
</dbReference>
<dbReference type="InterPro" id="IPR002474">
    <property type="entry name" value="CarbamoylP_synth_ssu_N"/>
</dbReference>
<dbReference type="InterPro" id="IPR036480">
    <property type="entry name" value="CarbP_synth_ssu_N_sf"/>
</dbReference>
<dbReference type="InterPro" id="IPR029062">
    <property type="entry name" value="Class_I_gatase-like"/>
</dbReference>
<dbReference type="InterPro" id="IPR035686">
    <property type="entry name" value="CPSase_GATase1"/>
</dbReference>
<dbReference type="InterPro" id="IPR017926">
    <property type="entry name" value="GATASE"/>
</dbReference>
<dbReference type="NCBIfam" id="TIGR01368">
    <property type="entry name" value="CPSaseIIsmall"/>
    <property type="match status" value="1"/>
</dbReference>
<dbReference type="NCBIfam" id="NF009475">
    <property type="entry name" value="PRK12838.1"/>
    <property type="match status" value="1"/>
</dbReference>
<dbReference type="PANTHER" id="PTHR43418:SF7">
    <property type="entry name" value="CARBAMOYL-PHOSPHATE SYNTHASE SMALL CHAIN"/>
    <property type="match status" value="1"/>
</dbReference>
<dbReference type="PANTHER" id="PTHR43418">
    <property type="entry name" value="MULTIFUNCTIONAL TRYPTOPHAN BIOSYNTHESIS PROTEIN-RELATED"/>
    <property type="match status" value="1"/>
</dbReference>
<dbReference type="Pfam" id="PF00988">
    <property type="entry name" value="CPSase_sm_chain"/>
    <property type="match status" value="1"/>
</dbReference>
<dbReference type="Pfam" id="PF00117">
    <property type="entry name" value="GATase"/>
    <property type="match status" value="1"/>
</dbReference>
<dbReference type="PRINTS" id="PR00097">
    <property type="entry name" value="ANTSNTHASEII"/>
</dbReference>
<dbReference type="PRINTS" id="PR00099">
    <property type="entry name" value="CPSGATASE"/>
</dbReference>
<dbReference type="PRINTS" id="PR00096">
    <property type="entry name" value="GATASE"/>
</dbReference>
<dbReference type="SMART" id="SM01097">
    <property type="entry name" value="CPSase_sm_chain"/>
    <property type="match status" value="1"/>
</dbReference>
<dbReference type="SUPFAM" id="SSF52021">
    <property type="entry name" value="Carbamoyl phosphate synthetase, small subunit N-terminal domain"/>
    <property type="match status" value="1"/>
</dbReference>
<dbReference type="SUPFAM" id="SSF52317">
    <property type="entry name" value="Class I glutamine amidotransferase-like"/>
    <property type="match status" value="1"/>
</dbReference>
<dbReference type="PROSITE" id="PS51273">
    <property type="entry name" value="GATASE_TYPE_1"/>
    <property type="match status" value="1"/>
</dbReference>
<reference key="1">
    <citation type="journal article" date="2002" name="Nucleic Acids Res.">
        <title>Genome sequence of Oceanobacillus iheyensis isolated from the Iheya Ridge and its unexpected adaptive capabilities to extreme environments.</title>
        <authorList>
            <person name="Takami H."/>
            <person name="Takaki Y."/>
            <person name="Uchiyama I."/>
        </authorList>
    </citation>
    <scope>NUCLEOTIDE SEQUENCE [LARGE SCALE GENOMIC DNA]</scope>
    <source>
        <strain>DSM 14371 / CIP 107618 / JCM 11309 / KCTC 3954 / HTE831</strain>
    </source>
</reference>
<feature type="chain" id="PRO_0000112300" description="Carbamoyl phosphate synthase small chain">
    <location>
        <begin position="1"/>
        <end position="366"/>
    </location>
</feature>
<feature type="domain" description="Glutamine amidotransferase type-1" evidence="1">
    <location>
        <begin position="172"/>
        <end position="359"/>
    </location>
</feature>
<feature type="region of interest" description="CPSase" evidence="1">
    <location>
        <begin position="1"/>
        <end position="171"/>
    </location>
</feature>
<feature type="active site" description="Nucleophile" evidence="1">
    <location>
        <position position="247"/>
    </location>
</feature>
<feature type="active site" evidence="1">
    <location>
        <position position="332"/>
    </location>
</feature>
<feature type="active site" evidence="1">
    <location>
        <position position="334"/>
    </location>
</feature>
<feature type="binding site" evidence="1">
    <location>
        <position position="46"/>
    </location>
    <ligand>
        <name>L-glutamine</name>
        <dbReference type="ChEBI" id="CHEBI:58359"/>
    </ligand>
</feature>
<feature type="binding site" evidence="1">
    <location>
        <position position="220"/>
    </location>
    <ligand>
        <name>L-glutamine</name>
        <dbReference type="ChEBI" id="CHEBI:58359"/>
    </ligand>
</feature>
<feature type="binding site" evidence="1">
    <location>
        <position position="222"/>
    </location>
    <ligand>
        <name>L-glutamine</name>
        <dbReference type="ChEBI" id="CHEBI:58359"/>
    </ligand>
</feature>
<feature type="binding site" evidence="1">
    <location>
        <position position="248"/>
    </location>
    <ligand>
        <name>L-glutamine</name>
        <dbReference type="ChEBI" id="CHEBI:58359"/>
    </ligand>
</feature>
<feature type="binding site" evidence="1">
    <location>
        <position position="251"/>
    </location>
    <ligand>
        <name>L-glutamine</name>
        <dbReference type="ChEBI" id="CHEBI:58359"/>
    </ligand>
</feature>
<feature type="binding site" evidence="1">
    <location>
        <position position="289"/>
    </location>
    <ligand>
        <name>L-glutamine</name>
        <dbReference type="ChEBI" id="CHEBI:58359"/>
    </ligand>
</feature>
<feature type="binding site" evidence="1">
    <location>
        <position position="292"/>
    </location>
    <ligand>
        <name>L-glutamine</name>
        <dbReference type="ChEBI" id="CHEBI:58359"/>
    </ligand>
</feature>
<keyword id="KW-0028">Amino-acid biosynthesis</keyword>
<keyword id="KW-0055">Arginine biosynthesis</keyword>
<keyword id="KW-0067">ATP-binding</keyword>
<keyword id="KW-0315">Glutamine amidotransferase</keyword>
<keyword id="KW-0436">Ligase</keyword>
<keyword id="KW-0547">Nucleotide-binding</keyword>
<keyword id="KW-0665">Pyrimidine biosynthesis</keyword>
<keyword id="KW-1185">Reference proteome</keyword>
<comment type="function">
    <text evidence="1">Small subunit of the glutamine-dependent carbamoyl phosphate synthetase (CPSase). CPSase catalyzes the formation of carbamoyl phosphate from the ammonia moiety of glutamine, carbonate, and phosphate donated by ATP, constituting the first step of 2 biosynthetic pathways, one leading to arginine and/or urea and the other to pyrimidine nucleotides. The small subunit (glutamine amidotransferase) binds and cleaves glutamine to supply the large subunit with the substrate ammonia.</text>
</comment>
<comment type="catalytic activity">
    <reaction evidence="1">
        <text>hydrogencarbonate + L-glutamine + 2 ATP + H2O = carbamoyl phosphate + L-glutamate + 2 ADP + phosphate + 2 H(+)</text>
        <dbReference type="Rhea" id="RHEA:18633"/>
        <dbReference type="ChEBI" id="CHEBI:15377"/>
        <dbReference type="ChEBI" id="CHEBI:15378"/>
        <dbReference type="ChEBI" id="CHEBI:17544"/>
        <dbReference type="ChEBI" id="CHEBI:29985"/>
        <dbReference type="ChEBI" id="CHEBI:30616"/>
        <dbReference type="ChEBI" id="CHEBI:43474"/>
        <dbReference type="ChEBI" id="CHEBI:58228"/>
        <dbReference type="ChEBI" id="CHEBI:58359"/>
        <dbReference type="ChEBI" id="CHEBI:456216"/>
        <dbReference type="EC" id="6.3.5.5"/>
    </reaction>
</comment>
<comment type="catalytic activity">
    <molecule>Carbamoyl phosphate synthase small chain</molecule>
    <reaction evidence="1">
        <text>L-glutamine + H2O = L-glutamate + NH4(+)</text>
        <dbReference type="Rhea" id="RHEA:15889"/>
        <dbReference type="ChEBI" id="CHEBI:15377"/>
        <dbReference type="ChEBI" id="CHEBI:28938"/>
        <dbReference type="ChEBI" id="CHEBI:29985"/>
        <dbReference type="ChEBI" id="CHEBI:58359"/>
    </reaction>
</comment>
<comment type="pathway">
    <text evidence="1">Amino-acid biosynthesis; L-arginine biosynthesis; carbamoyl phosphate from bicarbonate: step 1/1.</text>
</comment>
<comment type="pathway">
    <text evidence="1">Pyrimidine metabolism; UMP biosynthesis via de novo pathway; (S)-dihydroorotate from bicarbonate: step 1/3.</text>
</comment>
<comment type="subunit">
    <text evidence="1">Composed of two chains; the small (or glutamine) chain promotes the hydrolysis of glutamine to ammonia, which is used by the large (or ammonia) chain to synthesize carbamoyl phosphate. Tetramer of heterodimers (alpha,beta)4.</text>
</comment>
<comment type="similarity">
    <text evidence="1">Belongs to the CarA family.</text>
</comment>
<proteinExistence type="inferred from homology"/>
<organism>
    <name type="scientific">Oceanobacillus iheyensis (strain DSM 14371 / CIP 107618 / JCM 11309 / KCTC 3954 / HTE831)</name>
    <dbReference type="NCBI Taxonomy" id="221109"/>
    <lineage>
        <taxon>Bacteria</taxon>
        <taxon>Bacillati</taxon>
        <taxon>Bacillota</taxon>
        <taxon>Bacilli</taxon>
        <taxon>Bacillales</taxon>
        <taxon>Bacillaceae</taxon>
        <taxon>Oceanobacillus</taxon>
    </lineage>
</organism>
<gene>
    <name evidence="1" type="primary">carA</name>
    <name type="synonym">pyrAA</name>
    <name type="ordered locus">OB1490</name>
</gene>
<evidence type="ECO:0000255" key="1">
    <source>
        <dbReference type="HAMAP-Rule" id="MF_01209"/>
    </source>
</evidence>
<sequence length="366" mass="40740">MKKRKLILEDGTVFNGTAFGSDAESSGEIVFNTGMTGYQEVITDPSYCGQFVTLTYPLIGNYGINRDDFETVTPFIHGLVVKEYSEFPSNFRNEETLDEFLQAHNIPGIANIDTRKLTRIIRKHGTMRAVMVDEQKNEQHVIEQLRLAEMPRDQVKRTSTIKPYVVPGRGLRVVMVDFGAKHGILRELTRRDCHITVVPHNYSAEAILRLKPDGIMLTNGPGDPKDVPEAIEMIKQLLGQIPIFGICLGHQLLALACGADTEKMKFGHRGANHPVKDLLAGKTYLTSQNHSYAVNVSSLVNTDLELTQIALNDDTVEGIRHTAFPAFSVQYHPEASPGPEDTNFLFDEFLNLIKASKVKQGGEVYA</sequence>
<accession>Q8CXH8</accession>
<protein>
    <recommendedName>
        <fullName evidence="1">Carbamoyl phosphate synthase small chain</fullName>
        <ecNumber evidence="1">6.3.5.5</ecNumber>
    </recommendedName>
    <alternativeName>
        <fullName evidence="1">Carbamoyl phosphate synthetase glutamine chain</fullName>
    </alternativeName>
</protein>
<name>CARA_OCEIH</name>